<accession>A9A1A0</accession>
<comment type="catalytic activity">
    <reaction evidence="1">
        <text>(S)-4-amino-5-oxopentanoate = 5-aminolevulinate</text>
        <dbReference type="Rhea" id="RHEA:14265"/>
        <dbReference type="ChEBI" id="CHEBI:57501"/>
        <dbReference type="ChEBI" id="CHEBI:356416"/>
        <dbReference type="EC" id="5.4.3.8"/>
    </reaction>
</comment>
<comment type="cofactor">
    <cofactor evidence="1">
        <name>pyridoxal 5'-phosphate</name>
        <dbReference type="ChEBI" id="CHEBI:597326"/>
    </cofactor>
</comment>
<comment type="pathway">
    <text evidence="1">Porphyrin-containing compound metabolism; protoporphyrin-IX biosynthesis; 5-aminolevulinate from L-glutamyl-tRNA(Glu): step 2/2.</text>
</comment>
<comment type="subcellular location">
    <subcellularLocation>
        <location evidence="1">Cytoplasm</location>
    </subcellularLocation>
</comment>
<comment type="similarity">
    <text evidence="1">Belongs to the class-III pyridoxal-phosphate-dependent aminotransferase family. HemL subfamily.</text>
</comment>
<evidence type="ECO:0000255" key="1">
    <source>
        <dbReference type="HAMAP-Rule" id="MF_00375"/>
    </source>
</evidence>
<sequence length="424" mass="46604">MSNSKLFSDAKKVIPSGVNSPVRYFEPYPFFTKKANGAYIWDVDNRKLIDFCNGYGALLLGHRRKEIINSVSKQLTKGTLYCTPTEGETELAKLIIGNFPSIDKVRLMNTGGEATMTAIRLARGFTKKKKIIKFEGCYHGAHDSVLVKAGSGSAHNGISVSDGGLDEVSKNTLVVQYNNIEDLQKTIQKNKDIAGVIVEPILANMGLILPEKNFLSDLRKITKENNIPLIFDEVVTGFRVAPGGAQEHFGIKPDITTMAKALSNGFAISAVGGKKEIMDLLSPGGKVYQASTFAGNPISVSAAIASIKTINKLKNKLYSKLERFNLLFSTALDDMATDMGIPHQINFTASMFQIFFTNKPVTNYETSKKANAKKFQKLFRTLLKKGIFIAPSQFEVVFLSDAHTENDLNKTLDAYHLALKSVKN</sequence>
<name>GSA_NITMS</name>
<protein>
    <recommendedName>
        <fullName evidence="1">Glutamate-1-semialdehyde 2,1-aminomutase</fullName>
        <shortName evidence="1">GSA</shortName>
        <ecNumber evidence="1">5.4.3.8</ecNumber>
    </recommendedName>
    <alternativeName>
        <fullName evidence="1">Glutamate-1-semialdehyde aminotransferase</fullName>
        <shortName evidence="1">GSA-AT</shortName>
    </alternativeName>
</protein>
<proteinExistence type="inferred from homology"/>
<reference key="1">
    <citation type="journal article" date="2010" name="Proc. Natl. Acad. Sci. U.S.A.">
        <title>Nitrosopumilus maritimus genome reveals unique mechanisms for nitrification and autotrophy in globally distributed marine crenarchaea.</title>
        <authorList>
            <person name="Walker C.B."/>
            <person name="de la Torre J.R."/>
            <person name="Klotz M.G."/>
            <person name="Urakawa H."/>
            <person name="Pinel N."/>
            <person name="Arp D.J."/>
            <person name="Brochier-Armanet C."/>
            <person name="Chain P.S."/>
            <person name="Chan P.P."/>
            <person name="Gollabgir A."/>
            <person name="Hemp J."/>
            <person name="Hugler M."/>
            <person name="Karr E.A."/>
            <person name="Konneke M."/>
            <person name="Shin M."/>
            <person name="Lawton T.J."/>
            <person name="Lowe T."/>
            <person name="Martens-Habbena W."/>
            <person name="Sayavedra-Soto L.A."/>
            <person name="Lang D."/>
            <person name="Sievert S.M."/>
            <person name="Rosenzweig A.C."/>
            <person name="Manning G."/>
            <person name="Stahl D.A."/>
        </authorList>
    </citation>
    <scope>NUCLEOTIDE SEQUENCE [LARGE SCALE GENOMIC DNA]</scope>
    <source>
        <strain>SCM1</strain>
    </source>
</reference>
<organism>
    <name type="scientific">Nitrosopumilus maritimus (strain SCM1)</name>
    <dbReference type="NCBI Taxonomy" id="436308"/>
    <lineage>
        <taxon>Archaea</taxon>
        <taxon>Nitrososphaerota</taxon>
        <taxon>Nitrososphaeria</taxon>
        <taxon>Nitrosopumilales</taxon>
        <taxon>Nitrosopumilaceae</taxon>
        <taxon>Nitrosopumilus</taxon>
    </lineage>
</organism>
<dbReference type="EC" id="5.4.3.8" evidence="1"/>
<dbReference type="EMBL" id="CP000866">
    <property type="protein sequence ID" value="ABX12386.1"/>
    <property type="molecule type" value="Genomic_DNA"/>
</dbReference>
<dbReference type="SMR" id="A9A1A0"/>
<dbReference type="FunCoup" id="A9A1A0">
    <property type="interactions" value="105"/>
</dbReference>
<dbReference type="STRING" id="436308.Nmar_0490"/>
<dbReference type="EnsemblBacteria" id="ABX12386">
    <property type="protein sequence ID" value="ABX12386"/>
    <property type="gene ID" value="Nmar_0490"/>
</dbReference>
<dbReference type="KEGG" id="nmr:Nmar_0490"/>
<dbReference type="eggNOG" id="arCOG00918">
    <property type="taxonomic scope" value="Archaea"/>
</dbReference>
<dbReference type="HOGENOM" id="CLU_016922_1_5_2"/>
<dbReference type="InParanoid" id="A9A1A0"/>
<dbReference type="PhylomeDB" id="A9A1A0"/>
<dbReference type="UniPathway" id="UPA00251">
    <property type="reaction ID" value="UER00317"/>
</dbReference>
<dbReference type="Proteomes" id="UP000000792">
    <property type="component" value="Chromosome"/>
</dbReference>
<dbReference type="GO" id="GO:0005737">
    <property type="term" value="C:cytoplasm"/>
    <property type="evidence" value="ECO:0007669"/>
    <property type="project" value="UniProtKB-SubCell"/>
</dbReference>
<dbReference type="GO" id="GO:0042286">
    <property type="term" value="F:glutamate-1-semialdehyde 2,1-aminomutase activity"/>
    <property type="evidence" value="ECO:0007669"/>
    <property type="project" value="UniProtKB-UniRule"/>
</dbReference>
<dbReference type="GO" id="GO:0030170">
    <property type="term" value="F:pyridoxal phosphate binding"/>
    <property type="evidence" value="ECO:0007669"/>
    <property type="project" value="InterPro"/>
</dbReference>
<dbReference type="GO" id="GO:0008483">
    <property type="term" value="F:transaminase activity"/>
    <property type="evidence" value="ECO:0007669"/>
    <property type="project" value="InterPro"/>
</dbReference>
<dbReference type="GO" id="GO:0006782">
    <property type="term" value="P:protoporphyrinogen IX biosynthetic process"/>
    <property type="evidence" value="ECO:0007669"/>
    <property type="project" value="UniProtKB-UniRule"/>
</dbReference>
<dbReference type="CDD" id="cd00610">
    <property type="entry name" value="OAT_like"/>
    <property type="match status" value="1"/>
</dbReference>
<dbReference type="FunFam" id="3.40.640.10:FF:000021">
    <property type="entry name" value="Glutamate-1-semialdehyde 2,1-aminomutase"/>
    <property type="match status" value="1"/>
</dbReference>
<dbReference type="Gene3D" id="3.90.1150.10">
    <property type="entry name" value="Aspartate Aminotransferase, domain 1"/>
    <property type="match status" value="1"/>
</dbReference>
<dbReference type="Gene3D" id="3.40.640.10">
    <property type="entry name" value="Type I PLP-dependent aspartate aminotransferase-like (Major domain)"/>
    <property type="match status" value="1"/>
</dbReference>
<dbReference type="HAMAP" id="MF_00375">
    <property type="entry name" value="HemL_aminotrans_3"/>
    <property type="match status" value="1"/>
</dbReference>
<dbReference type="InterPro" id="IPR004639">
    <property type="entry name" value="4pyrrol_synth_GluAld_NH2Trfase"/>
</dbReference>
<dbReference type="InterPro" id="IPR005814">
    <property type="entry name" value="Aminotrans_3"/>
</dbReference>
<dbReference type="InterPro" id="IPR049704">
    <property type="entry name" value="Aminotrans_3_PPA_site"/>
</dbReference>
<dbReference type="InterPro" id="IPR015424">
    <property type="entry name" value="PyrdxlP-dep_Trfase"/>
</dbReference>
<dbReference type="InterPro" id="IPR015421">
    <property type="entry name" value="PyrdxlP-dep_Trfase_major"/>
</dbReference>
<dbReference type="InterPro" id="IPR015422">
    <property type="entry name" value="PyrdxlP-dep_Trfase_small"/>
</dbReference>
<dbReference type="NCBIfam" id="TIGR00713">
    <property type="entry name" value="hemL"/>
    <property type="match status" value="1"/>
</dbReference>
<dbReference type="NCBIfam" id="NF000818">
    <property type="entry name" value="PRK00062.1"/>
    <property type="match status" value="1"/>
</dbReference>
<dbReference type="PANTHER" id="PTHR43713">
    <property type="entry name" value="GLUTAMATE-1-SEMIALDEHYDE 2,1-AMINOMUTASE"/>
    <property type="match status" value="1"/>
</dbReference>
<dbReference type="PANTHER" id="PTHR43713:SF3">
    <property type="entry name" value="GLUTAMATE-1-SEMIALDEHYDE 2,1-AMINOMUTASE 1, CHLOROPLASTIC-RELATED"/>
    <property type="match status" value="1"/>
</dbReference>
<dbReference type="Pfam" id="PF00202">
    <property type="entry name" value="Aminotran_3"/>
    <property type="match status" value="1"/>
</dbReference>
<dbReference type="SUPFAM" id="SSF53383">
    <property type="entry name" value="PLP-dependent transferases"/>
    <property type="match status" value="1"/>
</dbReference>
<dbReference type="PROSITE" id="PS00600">
    <property type="entry name" value="AA_TRANSFER_CLASS_3"/>
    <property type="match status" value="1"/>
</dbReference>
<keyword id="KW-0963">Cytoplasm</keyword>
<keyword id="KW-0413">Isomerase</keyword>
<keyword id="KW-0627">Porphyrin biosynthesis</keyword>
<keyword id="KW-0663">Pyridoxal phosphate</keyword>
<keyword id="KW-1185">Reference proteome</keyword>
<gene>
    <name evidence="1" type="primary">hemL</name>
    <name type="ordered locus">Nmar_0490</name>
</gene>
<feature type="chain" id="PRO_0000382410" description="Glutamate-1-semialdehyde 2,1-aminomutase">
    <location>
        <begin position="1"/>
        <end position="424"/>
    </location>
</feature>
<feature type="modified residue" description="N6-(pyridoxal phosphate)lysine" evidence="1">
    <location>
        <position position="260"/>
    </location>
</feature>